<feature type="signal peptide" evidence="1">
    <location>
        <begin position="1"/>
        <end position="22"/>
    </location>
</feature>
<feature type="chain" id="PRO_0000036290" description="UPF0312 protein VVA0736">
    <location>
        <begin position="23"/>
        <end position="189"/>
    </location>
</feature>
<sequence length="189" mass="20369">MRKSVIATGLALMMAVPFAANAADYVIDTKGAHASINFKVSHLGYSFIKGRFNTFSGDFSYDQNNIAASKVNVVVDTRSLDSNHAERDKHIRSGDFIDAGKFNTATFTSTKVMDKGDGKLDVMGDLTLHGVTKPITIAAEFVGAGQDPWGGQRAGFIGTTRLELADFNIPVMGTSSYVDMELHVEGIKK</sequence>
<name>Y4736_VIBVY</name>
<protein>
    <recommendedName>
        <fullName evidence="1">UPF0312 protein VVA0736</fullName>
    </recommendedName>
</protein>
<gene>
    <name type="ordered locus">VVA0736</name>
</gene>
<proteinExistence type="inferred from homology"/>
<keyword id="KW-0574">Periplasm</keyword>
<keyword id="KW-0732">Signal</keyword>
<comment type="subcellular location">
    <subcellularLocation>
        <location evidence="1">Periplasm</location>
    </subcellularLocation>
</comment>
<comment type="similarity">
    <text evidence="1">Belongs to the UPF0312 family. Type 1 subfamily.</text>
</comment>
<accession>Q7MED4</accession>
<dbReference type="EMBL" id="BA000038">
    <property type="protein sequence ID" value="BAC96762.1"/>
    <property type="molecule type" value="Genomic_DNA"/>
</dbReference>
<dbReference type="RefSeq" id="WP_011081206.1">
    <property type="nucleotide sequence ID" value="NC_005140.1"/>
</dbReference>
<dbReference type="SMR" id="Q7MED4"/>
<dbReference type="STRING" id="672.VV93_v1c37310"/>
<dbReference type="KEGG" id="vvy:VVA0736"/>
<dbReference type="eggNOG" id="COG2353">
    <property type="taxonomic scope" value="Bacteria"/>
</dbReference>
<dbReference type="HOGENOM" id="CLU_071003_1_2_6"/>
<dbReference type="Proteomes" id="UP000002675">
    <property type="component" value="Chromosome II"/>
</dbReference>
<dbReference type="GO" id="GO:0042597">
    <property type="term" value="C:periplasmic space"/>
    <property type="evidence" value="ECO:0007669"/>
    <property type="project" value="UniProtKB-SubCell"/>
</dbReference>
<dbReference type="Gene3D" id="2.40.128.110">
    <property type="entry name" value="Lipid/polyisoprenoid-binding, YceI-like"/>
    <property type="match status" value="1"/>
</dbReference>
<dbReference type="HAMAP" id="MF_00780">
    <property type="entry name" value="UPF0312"/>
    <property type="match status" value="1"/>
</dbReference>
<dbReference type="InterPro" id="IPR007372">
    <property type="entry name" value="Lipid/polyisoprenoid-bd_YceI"/>
</dbReference>
<dbReference type="InterPro" id="IPR036761">
    <property type="entry name" value="TTHA0802/YceI-like_sf"/>
</dbReference>
<dbReference type="InterPro" id="IPR023480">
    <property type="entry name" value="UPF0312/YceI"/>
</dbReference>
<dbReference type="NCBIfam" id="NF002994">
    <property type="entry name" value="PRK03757.1"/>
    <property type="match status" value="1"/>
</dbReference>
<dbReference type="PANTHER" id="PTHR34406">
    <property type="entry name" value="PROTEIN YCEI"/>
    <property type="match status" value="1"/>
</dbReference>
<dbReference type="PANTHER" id="PTHR34406:SF1">
    <property type="entry name" value="PROTEIN YCEI"/>
    <property type="match status" value="1"/>
</dbReference>
<dbReference type="Pfam" id="PF04264">
    <property type="entry name" value="YceI"/>
    <property type="match status" value="1"/>
</dbReference>
<dbReference type="SMART" id="SM00867">
    <property type="entry name" value="YceI"/>
    <property type="match status" value="1"/>
</dbReference>
<dbReference type="SUPFAM" id="SSF101874">
    <property type="entry name" value="YceI-like"/>
    <property type="match status" value="1"/>
</dbReference>
<evidence type="ECO:0000255" key="1">
    <source>
        <dbReference type="HAMAP-Rule" id="MF_00780"/>
    </source>
</evidence>
<reference key="1">
    <citation type="journal article" date="2003" name="Genome Res.">
        <title>Comparative genome analysis of Vibrio vulnificus, a marine pathogen.</title>
        <authorList>
            <person name="Chen C.-Y."/>
            <person name="Wu K.-M."/>
            <person name="Chang Y.-C."/>
            <person name="Chang C.-H."/>
            <person name="Tsai H.-C."/>
            <person name="Liao T.-L."/>
            <person name="Liu Y.-M."/>
            <person name="Chen H.-J."/>
            <person name="Shen A.B.-T."/>
            <person name="Li J.-C."/>
            <person name="Su T.-L."/>
            <person name="Shao C.-P."/>
            <person name="Lee C.-T."/>
            <person name="Hor L.-I."/>
            <person name="Tsai S.-F."/>
        </authorList>
    </citation>
    <scope>NUCLEOTIDE SEQUENCE [LARGE SCALE GENOMIC DNA]</scope>
    <source>
        <strain>YJ016</strain>
    </source>
</reference>
<organism>
    <name type="scientific">Vibrio vulnificus (strain YJ016)</name>
    <dbReference type="NCBI Taxonomy" id="196600"/>
    <lineage>
        <taxon>Bacteria</taxon>
        <taxon>Pseudomonadati</taxon>
        <taxon>Pseudomonadota</taxon>
        <taxon>Gammaproteobacteria</taxon>
        <taxon>Vibrionales</taxon>
        <taxon>Vibrionaceae</taxon>
        <taxon>Vibrio</taxon>
    </lineage>
</organism>